<feature type="initiator methionine" description="Removed" evidence="1">
    <location>
        <position position="1"/>
    </location>
</feature>
<feature type="chain" id="PRO_0000458137" description="Superkiller complex protein 3">
    <location>
        <begin position="2"/>
        <end position="1563"/>
    </location>
</feature>
<feature type="repeat" description="TPR 1" evidence="2">
    <location>
        <begin position="6"/>
        <end position="39"/>
    </location>
</feature>
<feature type="repeat" description="TPR 2" evidence="3">
    <location>
        <begin position="40"/>
        <end position="73"/>
    </location>
</feature>
<feature type="repeat" description="TPR 3" evidence="2">
    <location>
        <begin position="157"/>
        <end position="196"/>
    </location>
</feature>
<feature type="repeat" description="TPR 4" evidence="3">
    <location>
        <begin position="272"/>
        <end position="305"/>
    </location>
</feature>
<feature type="repeat" description="TPR 5" evidence="2">
    <location>
        <begin position="307"/>
        <end position="339"/>
    </location>
</feature>
<feature type="repeat" description="TPR 6" evidence="2">
    <location>
        <begin position="386"/>
        <end position="419"/>
    </location>
</feature>
<feature type="repeat" description="TPR 7" evidence="3">
    <location>
        <begin position="420"/>
        <end position="453"/>
    </location>
</feature>
<feature type="repeat" description="TPR 8" evidence="2">
    <location>
        <begin position="455"/>
        <end position="492"/>
    </location>
</feature>
<feature type="repeat" description="TPR 9" evidence="2">
    <location>
        <begin position="493"/>
        <end position="527"/>
    </location>
</feature>
<feature type="repeat" description="TPR 10" evidence="3">
    <location>
        <begin position="564"/>
        <end position="597"/>
    </location>
</feature>
<feature type="repeat" description="TPR 11" evidence="3">
    <location>
        <begin position="598"/>
        <end position="631"/>
    </location>
</feature>
<feature type="repeat" description="TPR 12" evidence="3">
    <location>
        <begin position="632"/>
        <end position="665"/>
    </location>
</feature>
<feature type="repeat" description="TPR 13" evidence="2">
    <location>
        <begin position="633"/>
        <end position="665"/>
    </location>
</feature>
<feature type="repeat" description="TPR 14" evidence="2">
    <location>
        <begin position="673"/>
        <end position="713"/>
    </location>
</feature>
<feature type="repeat" description="TPR 15" evidence="2">
    <location>
        <begin position="790"/>
        <end position="824"/>
    </location>
</feature>
<feature type="repeat" description="TPR 16" evidence="2">
    <location>
        <begin position="826"/>
        <end position="860"/>
    </location>
</feature>
<feature type="repeat" description="TPR 17" evidence="3">
    <location>
        <begin position="861"/>
        <end position="894"/>
    </location>
</feature>
<feature type="repeat" description="TPR 18" evidence="3">
    <location>
        <begin position="980"/>
        <end position="1013"/>
    </location>
</feature>
<feature type="repeat" description="TPR 19" evidence="3">
    <location>
        <begin position="1020"/>
        <end position="1053"/>
    </location>
</feature>
<feature type="repeat" description="TPR 20" evidence="2">
    <location>
        <begin position="1055"/>
        <end position="1084"/>
    </location>
</feature>
<feature type="repeat" description="TPR 21" evidence="2">
    <location>
        <begin position="1325"/>
        <end position="1358"/>
    </location>
</feature>
<feature type="repeat" description="TPR 22" evidence="3">
    <location>
        <begin position="1399"/>
        <end position="1432"/>
    </location>
</feature>
<feature type="modified residue" description="N-acetylserine" evidence="1">
    <location>
        <position position="2"/>
    </location>
</feature>
<sequence>MSSKEVKTALKSARDAIRNKEYKEALKHCKTVLKQEKNNYNAWVFIGVAAAELEQPDQAQGAYKKAAELEPEQLLAWQGLASLYEKCNQVNAKDDLPGVYQKLLDLYESADRQKWCDVCKKLVALYHQEKKHLEVARTWHRLIKTRQEDGADRQELYELWRKLSQLLAENIEDQNNETQQMLLTAFENALDLADNIPSEDHQVLYRNFIQCLSKFPHETTKLKKACEEMIAIYPTVQYPLEVICLYLIDSGSLTSEGHQYCCKLVEMNSKSGPGLIGLGIIALQDKKYEDAVRHLTEGLKESPVCIAGWCHLAEAQVKMHRPKEAILSCNQALKTIDNFGASGGNLHQKNLCLRLKAEALLKLSDGASSEEAVRTLDQVSDVDNTPGLLVLQGLACLNTGAVDKATKIMEDLVTSYPDLAEAHALEGRVHFTKKDYVQAEVSFQRALEKDAEVAEYHYQLGLTYWFMGEETRKDKTKALTHFLKAARLDAHMGKVFCYLGHYYRDVAGDRNRARGCYRKAFELDDNDAESGAAAVDLSLELEDTETALAILTAVTQKASAGAAKWAWLRRGLYHLKAGQHSQAVADLQAALRADPKDCNCWESLGEAYLSRGGYTTALKSFMKASELNPDSTYSVFKVAAIQQILGRYSEAIAQYQLIIKMKEDYVPALKGLGECHLLLGKVALVDFLDGKAVDYVEQALGYFTRALQHRADVSCLWKLVGDACTCLHPVSPSKVHVHVLGALLGQKEGQEVLKKEELLSLGGRCYGRALKLMSTSNTWCDLGINYYRQVQHLAETGSSMSDLTELLEKSLHCLKKAVRLDSNNHLHWNALGVVACYRGVGNYALAQHCFIKSIQAEQINAAAWTNLGVLYLATENIEQAHEAFKMAQSLDPSYLLCWIGQALIAERVGSYDTMDLFRHTTELSMHTEGAIGYAYWVCTTLQDKSNRETELYQYNILEMNAIPAAQGVLCKYVERIQNSASAFTMLGYLNEHLQLKKEAAEAYQRATTLLHSAEDQNTYNVAVRNWGRLLCSIGDYDRAIQAFKSTPLVELEDIIGFALALFMKGLYKESGSAYERALAVCKSEQDKAHILTAMAIVEYKQGKMDAAKSFLFKCSILKEPTAESLQALCALGLAMRDATLSKAALNELLKHIKRRNDYHSCLLMSAIYALQGHSVAVQRQVAKAVHSNPADPALWSLLSRIVAQYTQRSAKGGAVAGNVAHILDLNHGKKALLYTAVNQLAMGSSTAEDKSNTALKTIQKAAFLSPDDPAVWAGLMAACHADDKLALLNNTQPKRVDLYLALRSAVAASLKDKEILQNYNQSLEKWSFSQVVTGLIDTGKTSEAESLCTQSLKSNPDQPAVILLLRQVQCMSLLESQKPLPDAVLEELQKTVMSNSTSVPAWQWLAQVYQSQGMMGAAEMCYRKSLQVASQQGNWSGKLSSLLKLALLALEVCMANVSGDHWSSLVQEATSEALKVCFSPLAVFLQALLQFNRKMGARETRRLLERIVYQTGYPSSIVSAARWYLLRHLYAKDDPELIDVLVRNAETHGDKRILELNRKLSAQ</sequence>
<keyword id="KW-0007">Acetylation</keyword>
<keyword id="KW-0963">Cytoplasm</keyword>
<keyword id="KW-0539">Nucleus</keyword>
<keyword id="KW-1185">Reference proteome</keyword>
<keyword id="KW-0677">Repeat</keyword>
<keyword id="KW-0802">TPR repeat</keyword>
<gene>
    <name evidence="5" type="primary">Skic3</name>
</gene>
<protein>
    <recommendedName>
        <fullName>Superkiller complex protein 3</fullName>
        <shortName>Ski3</shortName>
    </recommendedName>
</protein>
<organism>
    <name type="scientific">Mus musculus</name>
    <name type="common">Mouse</name>
    <dbReference type="NCBI Taxonomy" id="10090"/>
    <lineage>
        <taxon>Eukaryota</taxon>
        <taxon>Metazoa</taxon>
        <taxon>Chordata</taxon>
        <taxon>Craniata</taxon>
        <taxon>Vertebrata</taxon>
        <taxon>Euteleostomi</taxon>
        <taxon>Mammalia</taxon>
        <taxon>Eutheria</taxon>
        <taxon>Euarchontoglires</taxon>
        <taxon>Glires</taxon>
        <taxon>Rodentia</taxon>
        <taxon>Myomorpha</taxon>
        <taxon>Muroidea</taxon>
        <taxon>Muridae</taxon>
        <taxon>Murinae</taxon>
        <taxon>Mus</taxon>
        <taxon>Mus</taxon>
    </lineage>
</organism>
<name>SKI3_MOUSE</name>
<accession>F8VPK0</accession>
<reference key="1">
    <citation type="journal article" date="2009" name="PLoS Biol.">
        <title>Lineage-specific biology revealed by a finished genome assembly of the mouse.</title>
        <authorList>
            <person name="Church D.M."/>
            <person name="Goodstadt L."/>
            <person name="Hillier L.W."/>
            <person name="Zody M.C."/>
            <person name="Goldstein S."/>
            <person name="She X."/>
            <person name="Bult C.J."/>
            <person name="Agarwala R."/>
            <person name="Cherry J.L."/>
            <person name="DiCuccio M."/>
            <person name="Hlavina W."/>
            <person name="Kapustin Y."/>
            <person name="Meric P."/>
            <person name="Maglott D."/>
            <person name="Birtle Z."/>
            <person name="Marques A.C."/>
            <person name="Graves T."/>
            <person name="Zhou S."/>
            <person name="Teague B."/>
            <person name="Potamousis K."/>
            <person name="Churas C."/>
            <person name="Place M."/>
            <person name="Herschleb J."/>
            <person name="Runnheim R."/>
            <person name="Forrest D."/>
            <person name="Amos-Landgraf J."/>
            <person name="Schwartz D.C."/>
            <person name="Cheng Z."/>
            <person name="Lindblad-Toh K."/>
            <person name="Eichler E.E."/>
            <person name="Ponting C.P."/>
        </authorList>
    </citation>
    <scope>NUCLEOTIDE SEQUENCE [LARGE SCALE GENOMIC DNA]</scope>
    <source>
        <strain>C57BL/6J</strain>
    </source>
</reference>
<evidence type="ECO:0000250" key="1">
    <source>
        <dbReference type="UniProtKB" id="Q6PGP7"/>
    </source>
</evidence>
<evidence type="ECO:0000255" key="2"/>
<evidence type="ECO:0000255" key="3">
    <source>
        <dbReference type="PROSITE-ProRule" id="PRU00339"/>
    </source>
</evidence>
<evidence type="ECO:0000305" key="4"/>
<evidence type="ECO:0000312" key="5">
    <source>
        <dbReference type="MGI" id="MGI:2679923"/>
    </source>
</evidence>
<proteinExistence type="inferred from homology"/>
<comment type="function">
    <text evidence="1">Component of the SKI complex, a multiprotein complex that assists the RNA-degrading exosome during the mRNA decay and quality-control pathways. The SKI complex catalyzes mRNA extraction from 80S ribosomal complexes in the 3'-5' direction and channels mRNA to the cytosolic exosome for degradation. SKI-mediated extraction of mRNA from stalled ribosomes allow binding of the Pelota-HBS1L complex and subsequent ribosome disassembly by ABCE1 for ribosome recycling. In the nucleus, the SKI complex associates with transcriptionally active genes in a manner dependent on PAF1 complex (PAF1C).</text>
</comment>
<comment type="subunit">
    <text evidence="1">Component of the SKI complex which consists of SKIC2, SKIC3 and SKIC8. Interacts with PAF1.</text>
</comment>
<comment type="subcellular location">
    <subcellularLocation>
        <location evidence="1">Cytoplasm</location>
    </subcellularLocation>
    <subcellularLocation>
        <location evidence="1">Nucleus</location>
    </subcellularLocation>
</comment>
<comment type="similarity">
    <text evidence="4">Belongs to the SKI3 family.</text>
</comment>
<dbReference type="CCDS" id="CCDS36735.1"/>
<dbReference type="RefSeq" id="NP_001074821.1">
    <property type="nucleotide sequence ID" value="NM_001081352.3"/>
</dbReference>
<dbReference type="RefSeq" id="NP_001413569.1">
    <property type="nucleotide sequence ID" value="NM_001426640.1"/>
</dbReference>
<dbReference type="RefSeq" id="NP_001413570.1">
    <property type="nucleotide sequence ID" value="NM_001426641.1"/>
</dbReference>
<dbReference type="RefSeq" id="XP_006517295.1">
    <property type="nucleotide sequence ID" value="XM_006517232.2"/>
</dbReference>
<dbReference type="RefSeq" id="XP_006517296.1">
    <property type="nucleotide sequence ID" value="XM_006517233.4"/>
</dbReference>
<dbReference type="RefSeq" id="XP_006517297.1">
    <property type="nucleotide sequence ID" value="XM_006517234.3"/>
</dbReference>
<dbReference type="RefSeq" id="XP_036013900.1">
    <property type="nucleotide sequence ID" value="XM_036158007.1"/>
</dbReference>
<dbReference type="RefSeq" id="XP_036013901.1">
    <property type="nucleotide sequence ID" value="XM_036158008.1"/>
</dbReference>
<dbReference type="SMR" id="F8VPK0"/>
<dbReference type="FunCoup" id="F8VPK0">
    <property type="interactions" value="3770"/>
</dbReference>
<dbReference type="STRING" id="10090.ENSMUSP00000153521"/>
<dbReference type="GlyGen" id="F8VPK0">
    <property type="glycosylation" value="3 sites, 1 N-linked glycan (1 site), 1 O-linked glycan (1 site)"/>
</dbReference>
<dbReference type="iPTMnet" id="F8VPK0"/>
<dbReference type="PhosphoSitePlus" id="F8VPK0"/>
<dbReference type="SwissPalm" id="F8VPK0"/>
<dbReference type="jPOST" id="F8VPK0"/>
<dbReference type="PaxDb" id="10090-ENSMUSP00000089045"/>
<dbReference type="PeptideAtlas" id="F8VPK0"/>
<dbReference type="ProteomicsDB" id="328935"/>
<dbReference type="Antibodypedia" id="48952">
    <property type="antibodies" value="28 antibodies from 15 providers"/>
</dbReference>
<dbReference type="Ensembl" id="ENSMUST00000091466.4">
    <property type="protein sequence ID" value="ENSMUSP00000089045.4"/>
    <property type="gene ID" value="ENSMUSG00000033991.10"/>
</dbReference>
<dbReference type="Ensembl" id="ENSMUST00000224386.2">
    <property type="protein sequence ID" value="ENSMUSP00000153521.2"/>
    <property type="gene ID" value="ENSMUSG00000033991.10"/>
</dbReference>
<dbReference type="GeneID" id="218343"/>
<dbReference type="KEGG" id="mmu:218343"/>
<dbReference type="UCSC" id="uc007rgk.1">
    <property type="organism name" value="mouse"/>
</dbReference>
<dbReference type="AGR" id="MGI:2679923"/>
<dbReference type="CTD" id="9652"/>
<dbReference type="MGI" id="MGI:2679923">
    <property type="gene designation" value="Skic3"/>
</dbReference>
<dbReference type="VEuPathDB" id="HostDB:ENSMUSG00000033991"/>
<dbReference type="eggNOG" id="KOG1127">
    <property type="taxonomic scope" value="Eukaryota"/>
</dbReference>
<dbReference type="GeneTree" id="ENSGT00390000016407"/>
<dbReference type="HOGENOM" id="CLU_003788_1_0_1"/>
<dbReference type="InParanoid" id="F8VPK0"/>
<dbReference type="OMA" id="CQWELDP"/>
<dbReference type="OrthoDB" id="421075at2759"/>
<dbReference type="TreeFam" id="TF323569"/>
<dbReference type="Reactome" id="R-MMU-429958">
    <property type="pathway name" value="mRNA decay by 3' to 5' exoribonuclease"/>
</dbReference>
<dbReference type="BioGRID-ORCS" id="218343">
    <property type="hits" value="9 hits in 77 CRISPR screens"/>
</dbReference>
<dbReference type="ChiTaRS" id="Ttc37">
    <property type="organism name" value="mouse"/>
</dbReference>
<dbReference type="PRO" id="PR:F8VPK0"/>
<dbReference type="Proteomes" id="UP000000589">
    <property type="component" value="Chromosome 13"/>
</dbReference>
<dbReference type="RNAct" id="F8VPK0">
    <property type="molecule type" value="protein"/>
</dbReference>
<dbReference type="Bgee" id="ENSMUSG00000033991">
    <property type="expression patterns" value="Expressed in animal zygote and 222 other cell types or tissues"/>
</dbReference>
<dbReference type="ExpressionAtlas" id="F8VPK0">
    <property type="expression patterns" value="baseline and differential"/>
</dbReference>
<dbReference type="GO" id="GO:0005829">
    <property type="term" value="C:cytosol"/>
    <property type="evidence" value="ECO:0007669"/>
    <property type="project" value="Ensembl"/>
</dbReference>
<dbReference type="GO" id="GO:0000791">
    <property type="term" value="C:euchromatin"/>
    <property type="evidence" value="ECO:0007669"/>
    <property type="project" value="Ensembl"/>
</dbReference>
<dbReference type="GO" id="GO:0005654">
    <property type="term" value="C:nucleoplasm"/>
    <property type="evidence" value="ECO:0007669"/>
    <property type="project" value="Ensembl"/>
</dbReference>
<dbReference type="GO" id="GO:0055087">
    <property type="term" value="C:Ski complex"/>
    <property type="evidence" value="ECO:0000250"/>
    <property type="project" value="UniProtKB"/>
</dbReference>
<dbReference type="GO" id="GO:0070478">
    <property type="term" value="P:nuclear-transcribed mRNA catabolic process, 3'-5' exonucleolytic nonsense-mediated decay"/>
    <property type="evidence" value="ECO:0000250"/>
    <property type="project" value="UniProtKB"/>
</dbReference>
<dbReference type="GO" id="GO:0072344">
    <property type="term" value="P:rescue of stalled ribosome"/>
    <property type="evidence" value="ECO:0000250"/>
    <property type="project" value="UniProtKB"/>
</dbReference>
<dbReference type="FunFam" id="1.25.40.10:FF:000546">
    <property type="entry name" value="Tetratricopeptide repeat domain 37"/>
    <property type="match status" value="1"/>
</dbReference>
<dbReference type="FunFam" id="1.25.40.10:FF:000574">
    <property type="entry name" value="Tetratricopeptide repeat domain 37"/>
    <property type="match status" value="1"/>
</dbReference>
<dbReference type="FunFam" id="1.25.40.10:FF:000585">
    <property type="entry name" value="Tetratricopeptide repeat domain 37"/>
    <property type="match status" value="1"/>
</dbReference>
<dbReference type="FunFam" id="1.25.40.10:FF:000742">
    <property type="entry name" value="Tetratricopeptide repeat domain 37"/>
    <property type="match status" value="1"/>
</dbReference>
<dbReference type="FunFam" id="1.25.40.10:FF:003650">
    <property type="entry name" value="Tetratricopeptide repeat protein 37"/>
    <property type="match status" value="1"/>
</dbReference>
<dbReference type="Gene3D" id="1.25.40.10">
    <property type="entry name" value="Tetratricopeptide repeat domain"/>
    <property type="match status" value="8"/>
</dbReference>
<dbReference type="InterPro" id="IPR039226">
    <property type="entry name" value="Ski3/TTC37"/>
</dbReference>
<dbReference type="InterPro" id="IPR011990">
    <property type="entry name" value="TPR-like_helical_dom_sf"/>
</dbReference>
<dbReference type="InterPro" id="IPR019734">
    <property type="entry name" value="TPR_rpt"/>
</dbReference>
<dbReference type="PANTHER" id="PTHR15704">
    <property type="entry name" value="SUPERKILLER 3 PROTEIN-RELATED"/>
    <property type="match status" value="1"/>
</dbReference>
<dbReference type="PANTHER" id="PTHR15704:SF7">
    <property type="entry name" value="SUPERKILLER COMPLEX PROTEIN 3"/>
    <property type="match status" value="1"/>
</dbReference>
<dbReference type="Pfam" id="PF13432">
    <property type="entry name" value="TPR_16"/>
    <property type="match status" value="2"/>
</dbReference>
<dbReference type="Pfam" id="PF14559">
    <property type="entry name" value="TPR_19"/>
    <property type="match status" value="1"/>
</dbReference>
<dbReference type="Pfam" id="PF13181">
    <property type="entry name" value="TPR_8"/>
    <property type="match status" value="1"/>
</dbReference>
<dbReference type="SMART" id="SM00028">
    <property type="entry name" value="TPR"/>
    <property type="match status" value="15"/>
</dbReference>
<dbReference type="SUPFAM" id="SSF81901">
    <property type="entry name" value="HCP-like"/>
    <property type="match status" value="1"/>
</dbReference>
<dbReference type="SUPFAM" id="SSF48452">
    <property type="entry name" value="TPR-like"/>
    <property type="match status" value="7"/>
</dbReference>
<dbReference type="PROSITE" id="PS50005">
    <property type="entry name" value="TPR"/>
    <property type="match status" value="5"/>
</dbReference>
<dbReference type="PROSITE" id="PS50293">
    <property type="entry name" value="TPR_REGION"/>
    <property type="match status" value="1"/>
</dbReference>